<protein>
    <recommendedName>
        <fullName>Amidophosphoribosyltransferase</fullName>
        <shortName>ATase</shortName>
        <ecNumber>2.4.2.14</ecNumber>
    </recommendedName>
    <alternativeName>
        <fullName>Glutamine phosphoribosylpyrophosphate amidotransferase</fullName>
    </alternativeName>
</protein>
<feature type="initiator methionine" description="Removed" evidence="1">
    <location>
        <position position="1"/>
    </location>
</feature>
<feature type="chain" id="PRO_0000139646" description="Amidophosphoribosyltransferase">
    <location>
        <begin position="2"/>
        <end position="533"/>
    </location>
</feature>
<feature type="domain" description="Glutamine amidotransferase type-2" evidence="2">
    <location>
        <begin position="2"/>
        <end position="238"/>
    </location>
</feature>
<feature type="active site" description="Nucleophile" evidence="2">
    <location>
        <position position="2"/>
    </location>
</feature>
<feature type="binding site" evidence="1">
    <location>
        <position position="383"/>
    </location>
    <ligand>
        <name>Mg(2+)</name>
        <dbReference type="ChEBI" id="CHEBI:18420"/>
    </ligand>
</feature>
<feature type="binding site" evidence="1">
    <location>
        <position position="384"/>
    </location>
    <ligand>
        <name>Mg(2+)</name>
        <dbReference type="ChEBI" id="CHEBI:18420"/>
    </ligand>
</feature>
<feature type="modified residue" description="Phosphoserine" evidence="3">
    <location>
        <position position="506"/>
    </location>
</feature>
<evidence type="ECO:0000250" key="1"/>
<evidence type="ECO:0000255" key="2">
    <source>
        <dbReference type="PROSITE-ProRule" id="PRU00609"/>
    </source>
</evidence>
<evidence type="ECO:0000269" key="3">
    <source>
    </source>
</evidence>
<evidence type="ECO:0000305" key="4"/>
<name>PUR1_SCHPO</name>
<sequence length="533" mass="59832">MCGILALMLADPHQQACPEIYEGLYSLQHRGQDAAGIVTAGNKGRLYQCKGSGMVADVFSQHQLRQLVGSMGIGHLRYPTAGSCAHSEAQPFYVNSPYGLVLGHNGNLINGPELRRFLDTEAHRHVNTGSDSELLLNIFAYELQRLDKFRINENDIFEALRNVYDRVNGGYACVAMIAGLGVLGFRDPNGIRPLVIGERDTPEGKDYMLASESVVLTQFGYRTFRDIRPGECVFIRRSNREDILAGFRGPRLFSRQILPCLRFTPDIFEYVYFARPDSVIDGLSVYQSRLNMGEKLAHTIMKRFGPDYMEKIDAVIPVPDSARTSALALAQTAQLPYVEAFIKNRYIGRTFIMPGQQIRRKSVRRKLNVQPQEFFDKNVLIVDDSIVRGTTSREIVQMARESGAKNVYLASCAPMITHPHVYGIDLADCKDLIAYGKTEDEVAEAISADGVIYQTLEDLLDSCRTAELTEFEVGLFTGEYTTGASKEYLVHLEQMRIANNRARKHSFAEDEEREAPEDISLHNTHSDVTFDFV</sequence>
<keyword id="KW-0315">Glutamine amidotransferase</keyword>
<keyword id="KW-0328">Glycosyltransferase</keyword>
<keyword id="KW-0460">Magnesium</keyword>
<keyword id="KW-0479">Metal-binding</keyword>
<keyword id="KW-0597">Phosphoprotein</keyword>
<keyword id="KW-0658">Purine biosynthesis</keyword>
<keyword id="KW-1185">Reference proteome</keyword>
<keyword id="KW-0808">Transferase</keyword>
<gene>
    <name type="primary">ade4</name>
    <name type="ORF">SPAC4D7.08c</name>
</gene>
<dbReference type="EC" id="2.4.2.14"/>
<dbReference type="EMBL" id="X72293">
    <property type="protein sequence ID" value="CAA51034.1"/>
    <property type="molecule type" value="Genomic_DNA"/>
</dbReference>
<dbReference type="EMBL" id="CU329670">
    <property type="protein sequence ID" value="CAB11280.1"/>
    <property type="molecule type" value="Genomic_DNA"/>
</dbReference>
<dbReference type="PIR" id="S43526">
    <property type="entry name" value="S43526"/>
</dbReference>
<dbReference type="RefSeq" id="NP_594961.1">
    <property type="nucleotide sequence ID" value="NM_001020392.2"/>
</dbReference>
<dbReference type="SMR" id="P41390"/>
<dbReference type="BioGRID" id="280040">
    <property type="interactions" value="8"/>
</dbReference>
<dbReference type="FunCoup" id="P41390">
    <property type="interactions" value="670"/>
</dbReference>
<dbReference type="STRING" id="284812.P41390"/>
<dbReference type="MEROPS" id="C44.001"/>
<dbReference type="iPTMnet" id="P41390"/>
<dbReference type="PaxDb" id="4896-SPAC4D7.08c.1"/>
<dbReference type="EnsemblFungi" id="SPAC4D7.08c.1">
    <property type="protein sequence ID" value="SPAC4D7.08c.1:pep"/>
    <property type="gene ID" value="SPAC4D7.08c"/>
</dbReference>
<dbReference type="PomBase" id="SPAC4D7.08c">
    <property type="gene designation" value="ade4"/>
</dbReference>
<dbReference type="VEuPathDB" id="FungiDB:SPAC4D7.08c"/>
<dbReference type="eggNOG" id="KOG0572">
    <property type="taxonomic scope" value="Eukaryota"/>
</dbReference>
<dbReference type="HOGENOM" id="CLU_022389_2_1_1"/>
<dbReference type="InParanoid" id="P41390"/>
<dbReference type="OMA" id="IRHFGVK"/>
<dbReference type="PhylomeDB" id="P41390"/>
<dbReference type="UniPathway" id="UPA00074">
    <property type="reaction ID" value="UER00124"/>
</dbReference>
<dbReference type="PRO" id="PR:P41390"/>
<dbReference type="Proteomes" id="UP000002485">
    <property type="component" value="Chromosome I"/>
</dbReference>
<dbReference type="GO" id="GO:0005737">
    <property type="term" value="C:cytoplasm"/>
    <property type="evidence" value="ECO:0007005"/>
    <property type="project" value="PomBase"/>
</dbReference>
<dbReference type="GO" id="GO:0004044">
    <property type="term" value="F:amidophosphoribosyltransferase activity"/>
    <property type="evidence" value="ECO:0000314"/>
    <property type="project" value="PomBase"/>
</dbReference>
<dbReference type="GO" id="GO:0046872">
    <property type="term" value="F:metal ion binding"/>
    <property type="evidence" value="ECO:0007669"/>
    <property type="project" value="UniProtKB-KW"/>
</dbReference>
<dbReference type="GO" id="GO:0006189">
    <property type="term" value="P:'de novo' IMP biosynthetic process"/>
    <property type="evidence" value="ECO:0000266"/>
    <property type="project" value="PomBase"/>
</dbReference>
<dbReference type="GO" id="GO:0046083">
    <property type="term" value="P:adenine metabolic process"/>
    <property type="evidence" value="ECO:0000315"/>
    <property type="project" value="PomBase"/>
</dbReference>
<dbReference type="GO" id="GO:0009113">
    <property type="term" value="P:purine nucleobase biosynthetic process"/>
    <property type="evidence" value="ECO:0000305"/>
    <property type="project" value="PomBase"/>
</dbReference>
<dbReference type="GO" id="GO:0006164">
    <property type="term" value="P:purine nucleotide biosynthetic process"/>
    <property type="evidence" value="ECO:0000318"/>
    <property type="project" value="GO_Central"/>
</dbReference>
<dbReference type="CDD" id="cd00715">
    <property type="entry name" value="GPATase_N"/>
    <property type="match status" value="1"/>
</dbReference>
<dbReference type="CDD" id="cd06223">
    <property type="entry name" value="PRTases_typeI"/>
    <property type="match status" value="1"/>
</dbReference>
<dbReference type="Gene3D" id="3.40.50.2020">
    <property type="match status" value="1"/>
</dbReference>
<dbReference type="Gene3D" id="3.60.20.10">
    <property type="entry name" value="Glutamine Phosphoribosylpyrophosphate, subunit 1, domain 1"/>
    <property type="match status" value="1"/>
</dbReference>
<dbReference type="HAMAP" id="MF_01931">
    <property type="entry name" value="PurF"/>
    <property type="match status" value="1"/>
</dbReference>
<dbReference type="InterPro" id="IPR017932">
    <property type="entry name" value="GATase_2_dom"/>
</dbReference>
<dbReference type="InterPro" id="IPR029055">
    <property type="entry name" value="Ntn_hydrolases_N"/>
</dbReference>
<dbReference type="InterPro" id="IPR000836">
    <property type="entry name" value="PRibTrfase_dom"/>
</dbReference>
<dbReference type="InterPro" id="IPR029057">
    <property type="entry name" value="PRTase-like"/>
</dbReference>
<dbReference type="InterPro" id="IPR005854">
    <property type="entry name" value="PurF"/>
</dbReference>
<dbReference type="InterPro" id="IPR035584">
    <property type="entry name" value="PurF_N"/>
</dbReference>
<dbReference type="NCBIfam" id="TIGR01134">
    <property type="entry name" value="purF"/>
    <property type="match status" value="1"/>
</dbReference>
<dbReference type="PANTHER" id="PTHR11907">
    <property type="entry name" value="AMIDOPHOSPHORIBOSYLTRANSFERASE"/>
    <property type="match status" value="1"/>
</dbReference>
<dbReference type="Pfam" id="PF13537">
    <property type="entry name" value="GATase_7"/>
    <property type="match status" value="1"/>
</dbReference>
<dbReference type="PIRSF" id="PIRSF000485">
    <property type="entry name" value="Amd_phspho_trans"/>
    <property type="match status" value="1"/>
</dbReference>
<dbReference type="SUPFAM" id="SSF56235">
    <property type="entry name" value="N-terminal nucleophile aminohydrolases (Ntn hydrolases)"/>
    <property type="match status" value="1"/>
</dbReference>
<dbReference type="SUPFAM" id="SSF53271">
    <property type="entry name" value="PRTase-like"/>
    <property type="match status" value="1"/>
</dbReference>
<dbReference type="PROSITE" id="PS51278">
    <property type="entry name" value="GATASE_TYPE_2"/>
    <property type="match status" value="1"/>
</dbReference>
<dbReference type="PROSITE" id="PS00103">
    <property type="entry name" value="PUR_PYR_PR_TRANSFER"/>
    <property type="match status" value="1"/>
</dbReference>
<comment type="catalytic activity">
    <reaction>
        <text>5-phospho-beta-D-ribosylamine + L-glutamate + diphosphate = 5-phospho-alpha-D-ribose 1-diphosphate + L-glutamine + H2O</text>
        <dbReference type="Rhea" id="RHEA:14905"/>
        <dbReference type="ChEBI" id="CHEBI:15377"/>
        <dbReference type="ChEBI" id="CHEBI:29985"/>
        <dbReference type="ChEBI" id="CHEBI:33019"/>
        <dbReference type="ChEBI" id="CHEBI:58017"/>
        <dbReference type="ChEBI" id="CHEBI:58359"/>
        <dbReference type="ChEBI" id="CHEBI:58681"/>
        <dbReference type="EC" id="2.4.2.14"/>
    </reaction>
</comment>
<comment type="cofactor">
    <cofactor>
        <name>Mg(2+)</name>
        <dbReference type="ChEBI" id="CHEBI:18420"/>
    </cofactor>
    <text>Binds 1 Mg(2+) ion per subunit.</text>
</comment>
<comment type="pathway">
    <text>Purine metabolism; IMP biosynthesis via de novo pathway; N(1)-(5-phospho-D-ribosyl)glycinamide from 5-phospho-alpha-D-ribose 1-diphosphate: step 1/2.</text>
</comment>
<comment type="similarity">
    <text evidence="4">In the C-terminal section; belongs to the purine/pyrimidine phosphoribosyltransferase family.</text>
</comment>
<organism>
    <name type="scientific">Schizosaccharomyces pombe (strain 972 / ATCC 24843)</name>
    <name type="common">Fission yeast</name>
    <dbReference type="NCBI Taxonomy" id="284812"/>
    <lineage>
        <taxon>Eukaryota</taxon>
        <taxon>Fungi</taxon>
        <taxon>Dikarya</taxon>
        <taxon>Ascomycota</taxon>
        <taxon>Taphrinomycotina</taxon>
        <taxon>Schizosaccharomycetes</taxon>
        <taxon>Schizosaccharomycetales</taxon>
        <taxon>Schizosaccharomycetaceae</taxon>
        <taxon>Schizosaccharomyces</taxon>
    </lineage>
</organism>
<proteinExistence type="evidence at protein level"/>
<accession>P41390</accession>
<reference key="1">
    <citation type="journal article" date="1994" name="Curr. Genet.">
        <title>The ade4 gene of Schizosaccharomyces pombe: cloning, sequence and regulation.</title>
        <authorList>
            <person name="Ludin K.M."/>
            <person name="Hilti N."/>
            <person name="Schweingruber M.E."/>
        </authorList>
    </citation>
    <scope>NUCLEOTIDE SEQUENCE [GENOMIC DNA]</scope>
</reference>
<reference key="2">
    <citation type="journal article" date="2002" name="Nature">
        <title>The genome sequence of Schizosaccharomyces pombe.</title>
        <authorList>
            <person name="Wood V."/>
            <person name="Gwilliam R."/>
            <person name="Rajandream M.A."/>
            <person name="Lyne M.H."/>
            <person name="Lyne R."/>
            <person name="Stewart A."/>
            <person name="Sgouros J.G."/>
            <person name="Peat N."/>
            <person name="Hayles J."/>
            <person name="Baker S.G."/>
            <person name="Basham D."/>
            <person name="Bowman S."/>
            <person name="Brooks K."/>
            <person name="Brown D."/>
            <person name="Brown S."/>
            <person name="Chillingworth T."/>
            <person name="Churcher C.M."/>
            <person name="Collins M."/>
            <person name="Connor R."/>
            <person name="Cronin A."/>
            <person name="Davis P."/>
            <person name="Feltwell T."/>
            <person name="Fraser A."/>
            <person name="Gentles S."/>
            <person name="Goble A."/>
            <person name="Hamlin N."/>
            <person name="Harris D.E."/>
            <person name="Hidalgo J."/>
            <person name="Hodgson G."/>
            <person name="Holroyd S."/>
            <person name="Hornsby T."/>
            <person name="Howarth S."/>
            <person name="Huckle E.J."/>
            <person name="Hunt S."/>
            <person name="Jagels K."/>
            <person name="James K.D."/>
            <person name="Jones L."/>
            <person name="Jones M."/>
            <person name="Leather S."/>
            <person name="McDonald S."/>
            <person name="McLean J."/>
            <person name="Mooney P."/>
            <person name="Moule S."/>
            <person name="Mungall K.L."/>
            <person name="Murphy L.D."/>
            <person name="Niblett D."/>
            <person name="Odell C."/>
            <person name="Oliver K."/>
            <person name="O'Neil S."/>
            <person name="Pearson D."/>
            <person name="Quail M.A."/>
            <person name="Rabbinowitsch E."/>
            <person name="Rutherford K.M."/>
            <person name="Rutter S."/>
            <person name="Saunders D."/>
            <person name="Seeger K."/>
            <person name="Sharp S."/>
            <person name="Skelton J."/>
            <person name="Simmonds M.N."/>
            <person name="Squares R."/>
            <person name="Squares S."/>
            <person name="Stevens K."/>
            <person name="Taylor K."/>
            <person name="Taylor R.G."/>
            <person name="Tivey A."/>
            <person name="Walsh S.V."/>
            <person name="Warren T."/>
            <person name="Whitehead S."/>
            <person name="Woodward J.R."/>
            <person name="Volckaert G."/>
            <person name="Aert R."/>
            <person name="Robben J."/>
            <person name="Grymonprez B."/>
            <person name="Weltjens I."/>
            <person name="Vanstreels E."/>
            <person name="Rieger M."/>
            <person name="Schaefer M."/>
            <person name="Mueller-Auer S."/>
            <person name="Gabel C."/>
            <person name="Fuchs M."/>
            <person name="Duesterhoeft A."/>
            <person name="Fritzc C."/>
            <person name="Holzer E."/>
            <person name="Moestl D."/>
            <person name="Hilbert H."/>
            <person name="Borzym K."/>
            <person name="Langer I."/>
            <person name="Beck A."/>
            <person name="Lehrach H."/>
            <person name="Reinhardt R."/>
            <person name="Pohl T.M."/>
            <person name="Eger P."/>
            <person name="Zimmermann W."/>
            <person name="Wedler H."/>
            <person name="Wambutt R."/>
            <person name="Purnelle B."/>
            <person name="Goffeau A."/>
            <person name="Cadieu E."/>
            <person name="Dreano S."/>
            <person name="Gloux S."/>
            <person name="Lelaure V."/>
            <person name="Mottier S."/>
            <person name="Galibert F."/>
            <person name="Aves S.J."/>
            <person name="Xiang Z."/>
            <person name="Hunt C."/>
            <person name="Moore K."/>
            <person name="Hurst S.M."/>
            <person name="Lucas M."/>
            <person name="Rochet M."/>
            <person name="Gaillardin C."/>
            <person name="Tallada V.A."/>
            <person name="Garzon A."/>
            <person name="Thode G."/>
            <person name="Daga R.R."/>
            <person name="Cruzado L."/>
            <person name="Jimenez J."/>
            <person name="Sanchez M."/>
            <person name="del Rey F."/>
            <person name="Benito J."/>
            <person name="Dominguez A."/>
            <person name="Revuelta J.L."/>
            <person name="Moreno S."/>
            <person name="Armstrong J."/>
            <person name="Forsburg S.L."/>
            <person name="Cerutti L."/>
            <person name="Lowe T."/>
            <person name="McCombie W.R."/>
            <person name="Paulsen I."/>
            <person name="Potashkin J."/>
            <person name="Shpakovski G.V."/>
            <person name="Ussery D."/>
            <person name="Barrell B.G."/>
            <person name="Nurse P."/>
        </authorList>
    </citation>
    <scope>NUCLEOTIDE SEQUENCE [LARGE SCALE GENOMIC DNA]</scope>
    <source>
        <strain>972 / ATCC 24843</strain>
    </source>
</reference>
<reference key="3">
    <citation type="journal article" date="2008" name="J. Proteome Res.">
        <title>Phosphoproteome analysis of fission yeast.</title>
        <authorList>
            <person name="Wilson-Grady J.T."/>
            <person name="Villen J."/>
            <person name="Gygi S.P."/>
        </authorList>
    </citation>
    <scope>PHOSPHORYLATION [LARGE SCALE ANALYSIS] AT SER-506</scope>
    <scope>IDENTIFICATION BY MASS SPECTROMETRY</scope>
</reference>